<protein>
    <recommendedName>
        <fullName evidence="1">UPF0102 protein YraN</fullName>
    </recommendedName>
</protein>
<accession>C4ZSN9</accession>
<sequence>MATVPTRSGSPRQLTTKQTGDAWEAQARRWLEGKGLRFIAANVNERGGEIDLIMREGRTTIFVEVRYRRSALYGGAAASVTRSKQHKLLQTARLWLARHNGSFDTVDCRFDVVAFTGNEVEWIKDAFNDHS</sequence>
<organism>
    <name type="scientific">Escherichia coli (strain K12 / MC4100 / BW2952)</name>
    <dbReference type="NCBI Taxonomy" id="595496"/>
    <lineage>
        <taxon>Bacteria</taxon>
        <taxon>Pseudomonadati</taxon>
        <taxon>Pseudomonadota</taxon>
        <taxon>Gammaproteobacteria</taxon>
        <taxon>Enterobacterales</taxon>
        <taxon>Enterobacteriaceae</taxon>
        <taxon>Escherichia</taxon>
    </lineage>
</organism>
<evidence type="ECO:0000255" key="1">
    <source>
        <dbReference type="HAMAP-Rule" id="MF_00048"/>
    </source>
</evidence>
<evidence type="ECO:0000256" key="2">
    <source>
        <dbReference type="SAM" id="MobiDB-lite"/>
    </source>
</evidence>
<proteinExistence type="inferred from homology"/>
<name>YRAN_ECOBW</name>
<dbReference type="EMBL" id="CP001396">
    <property type="protein sequence ID" value="ACR62531.1"/>
    <property type="molecule type" value="Genomic_DNA"/>
</dbReference>
<dbReference type="RefSeq" id="WP_000246830.1">
    <property type="nucleotide sequence ID" value="NC_012759.1"/>
</dbReference>
<dbReference type="SMR" id="C4ZSN9"/>
<dbReference type="KEGG" id="ebw:BWG_2852"/>
<dbReference type="HOGENOM" id="CLU_115353_1_0_6"/>
<dbReference type="GO" id="GO:0003676">
    <property type="term" value="F:nucleic acid binding"/>
    <property type="evidence" value="ECO:0007669"/>
    <property type="project" value="InterPro"/>
</dbReference>
<dbReference type="CDD" id="cd20736">
    <property type="entry name" value="PoNe_Nuclease"/>
    <property type="match status" value="1"/>
</dbReference>
<dbReference type="Gene3D" id="3.40.1350.10">
    <property type="match status" value="1"/>
</dbReference>
<dbReference type="HAMAP" id="MF_00048">
    <property type="entry name" value="UPF0102"/>
    <property type="match status" value="1"/>
</dbReference>
<dbReference type="InterPro" id="IPR011335">
    <property type="entry name" value="Restrct_endonuc-II-like"/>
</dbReference>
<dbReference type="InterPro" id="IPR011856">
    <property type="entry name" value="tRNA_endonuc-like_dom_sf"/>
</dbReference>
<dbReference type="InterPro" id="IPR003509">
    <property type="entry name" value="UPF0102_YraN-like"/>
</dbReference>
<dbReference type="NCBIfam" id="NF009150">
    <property type="entry name" value="PRK12497.1-3"/>
    <property type="match status" value="1"/>
</dbReference>
<dbReference type="NCBIfam" id="TIGR00252">
    <property type="entry name" value="YraN family protein"/>
    <property type="match status" value="1"/>
</dbReference>
<dbReference type="PANTHER" id="PTHR34039">
    <property type="entry name" value="UPF0102 PROTEIN YRAN"/>
    <property type="match status" value="1"/>
</dbReference>
<dbReference type="PANTHER" id="PTHR34039:SF1">
    <property type="entry name" value="UPF0102 PROTEIN YRAN"/>
    <property type="match status" value="1"/>
</dbReference>
<dbReference type="Pfam" id="PF02021">
    <property type="entry name" value="UPF0102"/>
    <property type="match status" value="1"/>
</dbReference>
<dbReference type="SUPFAM" id="SSF52980">
    <property type="entry name" value="Restriction endonuclease-like"/>
    <property type="match status" value="1"/>
</dbReference>
<comment type="similarity">
    <text evidence="1">Belongs to the UPF0102 family.</text>
</comment>
<gene>
    <name evidence="1" type="primary">yraN</name>
    <name type="ordered locus">BWG_2852</name>
</gene>
<reference key="1">
    <citation type="journal article" date="2009" name="J. Bacteriol.">
        <title>Genomic sequencing reveals regulatory mutations and recombinational events in the widely used MC4100 lineage of Escherichia coli K-12.</title>
        <authorList>
            <person name="Ferenci T."/>
            <person name="Zhou Z."/>
            <person name="Betteridge T."/>
            <person name="Ren Y."/>
            <person name="Liu Y."/>
            <person name="Feng L."/>
            <person name="Reeves P.R."/>
            <person name="Wang L."/>
        </authorList>
    </citation>
    <scope>NUCLEOTIDE SEQUENCE [LARGE SCALE GENOMIC DNA]</scope>
    <source>
        <strain>K12 / MC4100 / BW2952</strain>
    </source>
</reference>
<feature type="chain" id="PRO_1000202213" description="UPF0102 protein YraN">
    <location>
        <begin position="1"/>
        <end position="131"/>
    </location>
</feature>
<feature type="region of interest" description="Disordered" evidence="2">
    <location>
        <begin position="1"/>
        <end position="21"/>
    </location>
</feature>
<feature type="compositionally biased region" description="Polar residues" evidence="2">
    <location>
        <begin position="1"/>
        <end position="19"/>
    </location>
</feature>